<sequence>MPLKPEEHEDILNKLLDPELAQSERTEALQQLRVNYGSFVSEYNDLTKSHEKLAAEKDDLIVSNSKLFRQIGLTDKQEEDHKKADISETITIEDLEAK</sequence>
<dbReference type="EMBL" id="M14782">
    <property type="protein sequence ID" value="AAA32279.1"/>
    <property type="molecule type" value="Genomic_DNA"/>
</dbReference>
<dbReference type="EMBL" id="X04386">
    <property type="protein sequence ID" value="CAA27974.1"/>
    <property type="molecule type" value="Genomic_DNA"/>
</dbReference>
<dbReference type="EMBL" id="EU771092">
    <property type="protein sequence ID" value="ACE96029.1"/>
    <property type="molecule type" value="Genomic_DNA"/>
</dbReference>
<dbReference type="EMBL" id="AJ606486">
    <property type="protein sequence ID" value="CAE54613.1"/>
    <property type="molecule type" value="Genomic_DNA"/>
</dbReference>
<dbReference type="PIR" id="A28923">
    <property type="entry name" value="WMBPF9"/>
</dbReference>
<dbReference type="RefSeq" id="YP_002004535.1">
    <property type="nucleotide sequence ID" value="NC_011048.1"/>
</dbReference>
<dbReference type="PDB" id="1NO4">
    <property type="method" value="X-ray"/>
    <property type="resolution" value="2.20 A"/>
    <property type="chains" value="A/B/C/D=2-98"/>
</dbReference>
<dbReference type="PDB" id="1NOH">
    <property type="method" value="X-ray"/>
    <property type="resolution" value="2.80 A"/>
    <property type="chains" value="A/B/C/D=2-98"/>
</dbReference>
<dbReference type="PDB" id="3MTU">
    <property type="method" value="X-ray"/>
    <property type="resolution" value="2.10 A"/>
    <property type="chains" value="E/F=2-46"/>
</dbReference>
<dbReference type="PDB" id="3OA7">
    <property type="method" value="X-ray"/>
    <property type="resolution" value="2.30 A"/>
    <property type="chains" value="A=2-50"/>
</dbReference>
<dbReference type="PDB" id="4IFF">
    <property type="method" value="X-ray"/>
    <property type="resolution" value="2.30 A"/>
    <property type="chains" value="A/B/C/D=2-48"/>
</dbReference>
<dbReference type="PDB" id="4XA1">
    <property type="method" value="X-ray"/>
    <property type="resolution" value="3.20 A"/>
    <property type="chains" value="A/B/C/D=1-49"/>
</dbReference>
<dbReference type="PDB" id="4XA3">
    <property type="method" value="X-ray"/>
    <property type="resolution" value="2.55 A"/>
    <property type="chains" value="A/B=1-49"/>
</dbReference>
<dbReference type="PDB" id="4XA6">
    <property type="method" value="X-ray"/>
    <property type="resolution" value="3.42 A"/>
    <property type="chains" value="A/B/C/D=2-50"/>
</dbReference>
<dbReference type="PDB" id="5CJ1">
    <property type="method" value="X-ray"/>
    <property type="resolution" value="2.10 A"/>
    <property type="chains" value="A/B/C/D/E/F/G/H=2-52"/>
</dbReference>
<dbReference type="PDB" id="5WJB">
    <property type="method" value="X-ray"/>
    <property type="resolution" value="2.90 A"/>
    <property type="chains" value="A/B/C/D=2-48"/>
</dbReference>
<dbReference type="PDB" id="5WLQ">
    <property type="method" value="X-ray"/>
    <property type="resolution" value="3.10 A"/>
    <property type="chains" value="A=2-48"/>
</dbReference>
<dbReference type="PDB" id="5WME">
    <property type="method" value="X-ray"/>
    <property type="resolution" value="2.30 A"/>
    <property type="chains" value="A/B/C/D=2-52"/>
</dbReference>
<dbReference type="PDB" id="6PFP">
    <property type="method" value="X-ray"/>
    <property type="resolution" value="2.20 A"/>
    <property type="chains" value="A/B/C/D=2-48"/>
</dbReference>
<dbReference type="PDB" id="6YJD">
    <property type="method" value="X-ray"/>
    <property type="resolution" value="2.90 A"/>
    <property type="chains" value="A=1-54"/>
</dbReference>
<dbReference type="PDB" id="8F2M">
    <property type="method" value="EM"/>
    <property type="resolution" value="3.70 A"/>
    <property type="chains" value="B/C/F=1-98"/>
</dbReference>
<dbReference type="PDBsum" id="1NO4"/>
<dbReference type="PDBsum" id="1NOH"/>
<dbReference type="PDBsum" id="3MTU"/>
<dbReference type="PDBsum" id="3OA7"/>
<dbReference type="PDBsum" id="4IFF"/>
<dbReference type="PDBsum" id="4XA1"/>
<dbReference type="PDBsum" id="4XA3"/>
<dbReference type="PDBsum" id="4XA6"/>
<dbReference type="PDBsum" id="5CJ1"/>
<dbReference type="PDBsum" id="5WJB"/>
<dbReference type="PDBsum" id="5WLQ"/>
<dbReference type="PDBsum" id="5WME"/>
<dbReference type="PDBsum" id="6PFP"/>
<dbReference type="PDBsum" id="6YJD"/>
<dbReference type="PDBsum" id="8F2M"/>
<dbReference type="EMDB" id="EMD-28820"/>
<dbReference type="EMDB" id="EMD-28821"/>
<dbReference type="EMDB" id="EMD-28822"/>
<dbReference type="SMR" id="P13848"/>
<dbReference type="GeneID" id="6446525"/>
<dbReference type="KEGG" id="vg:6446525"/>
<dbReference type="EvolutionaryTrace" id="P13848"/>
<dbReference type="Proteomes" id="UP000001207">
    <property type="component" value="Genome"/>
</dbReference>
<dbReference type="GO" id="GO:0046806">
    <property type="term" value="C:viral scaffold"/>
    <property type="evidence" value="ECO:0000314"/>
    <property type="project" value="UniProtKB"/>
</dbReference>
<dbReference type="GO" id="GO:0003677">
    <property type="term" value="F:DNA binding"/>
    <property type="evidence" value="ECO:0007669"/>
    <property type="project" value="UniProtKB-KW"/>
</dbReference>
<dbReference type="GO" id="GO:0019068">
    <property type="term" value="P:virion assembly"/>
    <property type="evidence" value="ECO:0000314"/>
    <property type="project" value="DisProt"/>
</dbReference>
<dbReference type="FunFam" id="1.20.5.400:FF:000003">
    <property type="entry name" value="Capsid assembly scaffolding protein"/>
    <property type="match status" value="1"/>
</dbReference>
<dbReference type="Gene3D" id="1.20.5.400">
    <property type="match status" value="1"/>
</dbReference>
<dbReference type="InterPro" id="IPR038032">
    <property type="entry name" value="Gp7"/>
</dbReference>
<dbReference type="InterPro" id="IPR024374">
    <property type="entry name" value="Phage_phi-29_Gp7"/>
</dbReference>
<dbReference type="Pfam" id="PF11418">
    <property type="entry name" value="Scaffolding_pro"/>
    <property type="match status" value="1"/>
</dbReference>
<dbReference type="SUPFAM" id="SSF90246">
    <property type="entry name" value="Head morphogenesis protein gp7"/>
    <property type="match status" value="1"/>
</dbReference>
<gene>
    <name type="primary">7</name>
</gene>
<accession>P13848</accession>
<accession>B3VMP2</accession>
<accession>Q70AA8</accession>
<organismHost>
    <name type="scientific">Bacillus subtilis</name>
    <dbReference type="NCBI Taxonomy" id="1423"/>
</organismHost>
<reference key="1">
    <citation type="journal article" date="1986" name="Gene">
        <title>Nucleotide sequence of the late region of Bacillus phage phi 29 completes the 19,285-bp sequence of phi 29 genome. Comparison with the homologous sequence of phage PZA.</title>
        <authorList>
            <person name="Vlcek C."/>
            <person name="Paces V."/>
        </authorList>
    </citation>
    <scope>NUCLEOTIDE SEQUENCE [GENOMIC DNA]</scope>
</reference>
<reference key="2">
    <citation type="journal article" date="1986" name="Nucleic Acids Res.">
        <title>Nucleotide sequence of phage phi 29 gene 7: structure of intergenic spacer between the major early and late genes.</title>
        <authorList>
            <person name="Innis C.A."/>
            <person name="Garvey K.J."/>
            <person name="Ito J."/>
        </authorList>
    </citation>
    <scope>NUCLEOTIDE SEQUENCE [GENOMIC DNA]</scope>
</reference>
<reference key="3">
    <citation type="submission" date="2008-05" db="EMBL/GenBank/DDBJ databases">
        <authorList>
            <person name="Villegas A.P."/>
            <person name="Lingohr E.J."/>
            <person name="Ceyssens P.-J."/>
            <person name="Kropinski A.M."/>
        </authorList>
    </citation>
    <scope>NUCLEOTIDE SEQUENCE [GENOMIC DNA]</scope>
</reference>
<reference key="4">
    <citation type="journal article" date="2001" name="Microbiol. Mol. Biol. Rev.">
        <title>Phi29 family of phages.</title>
        <authorList>
            <person name="Meijer W.J.J."/>
            <person name="Horcajadas J.A."/>
            <person name="Salas M."/>
        </authorList>
    </citation>
    <scope>NUCLEOTIDE SEQUENCE [GENOMIC DNA] OF 16-65</scope>
    <source>
        <strain evidence="10">PhiFZB24</strain>
    </source>
</reference>
<reference key="5">
    <citation type="submission" date="2003-11" db="EMBL/GenBank/DDBJ databases">
        <title>Morphological and molecular characterization of a Bacillus phage isolated from a fermentation plant.</title>
        <authorList>
            <person name="Borriss R."/>
            <person name="Diesner M.O."/>
            <person name="Maennel A."/>
            <person name="Gelderblom H."/>
        </authorList>
    </citation>
    <scope>NUCLEOTIDE SEQUENCE [GENOMIC DNA] OF 16-65</scope>
    <source>
        <strain evidence="10">PhiFZB24</strain>
    </source>
</reference>
<reference key="6">
    <citation type="journal article" date="2001" name="J. Struct. Biol.">
        <title>Composition and mass of the bacteriophage phi29 prohead and virion.</title>
        <authorList>
            <person name="Peterson C."/>
            <person name="Simon M."/>
            <person name="Hodges J."/>
            <person name="Mertens P."/>
            <person name="Higgins L."/>
            <person name="Egelman E."/>
            <person name="Anderson D."/>
        </authorList>
    </citation>
    <scope>SUBCELLULAR LOCATION</scope>
</reference>
<reference key="7">
    <citation type="journal article" date="2006" name="Structure">
        <title>Determinants of bacteriophage phi29 head morphology.</title>
        <authorList>
            <person name="Choi K.H."/>
            <person name="Morais M.C."/>
            <person name="Anderson D.L."/>
            <person name="Rossmann M.G."/>
        </authorList>
    </citation>
    <scope>FUNCTION</scope>
</reference>
<reference key="8">
    <citation type="journal article" date="2007" name="J. Mol. Biol.">
        <title>Molecular dissection of phi29 scaffolding protein function in an in vitro assembly system.</title>
        <authorList>
            <person name="Fu C.Y."/>
            <person name="Morais M.C."/>
            <person name="Battisti A.J."/>
            <person name="Rossmann M.G."/>
            <person name="Prevelige P.E. Jr."/>
        </authorList>
    </citation>
    <scope>FUNCTION</scope>
</reference>
<reference key="9">
    <citation type="journal article" date="2013" name="Virology">
        <title>Phi29 scaffolding and connector structure-function relationship studied by trans-complementation.</title>
        <authorList>
            <person name="Li R."/>
            <person name="Cherwa J.E. Jr."/>
            <person name="Prevelige P.E. Jr."/>
        </authorList>
    </citation>
    <scope>FUNCTION</scope>
    <scope>MUTAGENESIS OF GLU-56 AND ARG-69</scope>
</reference>
<reference evidence="11 12" key="10">
    <citation type="journal article" date="2003" name="Nat. Struct. Biol.">
        <title>Bacteriophage phi29 scaffolding protein gp7 before and after prohead assembly.</title>
        <authorList>
            <person name="Morais M.C."/>
            <person name="Kanamaru S."/>
            <person name="Badasso M.O."/>
            <person name="Koti J.S."/>
            <person name="Owen B.A."/>
            <person name="McMurray C.T."/>
            <person name="Anderson D.L."/>
            <person name="Rossmann M.G."/>
        </authorList>
    </citation>
    <scope>X-RAY CRYSTALLOGRAPHY (2.20 ANGSTROMS) OF 2-98</scope>
    <scope>DNA-BINDING</scope>
    <scope>FUNCTION</scope>
    <scope>SUBUNIT</scope>
</reference>
<comment type="function">
    <text evidence="3 4 8 9">Scaffolding protein involved in the icosahedric procapsid assembly. Coassembles with the capsid proteins to form the procapsid. The scaffolding protein is found within the capsid as a serie of concentric shells. During DNA packaging, the scaffolding protein molecules are released from the procapsid.</text>
</comment>
<comment type="subunit">
    <text evidence="3">Homodimer. Interacts non-specifically with DNA; probably binds DNA in the early stages of DNA packaging.</text>
</comment>
<comment type="subcellular location">
    <text evidence="2">Present in about 147 copies in the prohead but not present in mature virions.</text>
</comment>
<comment type="similarity">
    <text evidence="7">Belongs to the phi29likevirus scaffolding protein family.</text>
</comment>
<feature type="chain" id="PRO_0000106571" description="Capsid assembly scaffolding protein">
    <location>
        <begin position="1"/>
        <end position="98"/>
    </location>
</feature>
<feature type="coiled-coil region" evidence="1">
    <location>
        <begin position="40"/>
        <end position="62"/>
    </location>
</feature>
<feature type="mutagenesis site" description="Forms procapsids which have incorporated the connector. Defective in producing infectious virions." evidence="5">
    <original>E</original>
    <variation>K</variation>
    <location>
        <position position="56"/>
    </location>
</feature>
<feature type="mutagenesis site" description="Fails to incorporate the connector. Defective in producing infectious virions." evidence="5">
    <original>R</original>
    <variation>E</variation>
    <location>
        <position position="69"/>
    </location>
</feature>
<feature type="helix" evidence="13">
    <location>
        <begin position="6"/>
        <end position="14"/>
    </location>
</feature>
<feature type="strand" evidence="14">
    <location>
        <begin position="18"/>
        <end position="20"/>
    </location>
</feature>
<feature type="helix" evidence="13">
    <location>
        <begin position="23"/>
        <end position="46"/>
    </location>
</feature>
<feature type="helix" evidence="13">
    <location>
        <begin position="51"/>
        <end position="59"/>
    </location>
</feature>
<evidence type="ECO:0000255" key="1"/>
<evidence type="ECO:0000269" key="2">
    <source>
    </source>
</evidence>
<evidence type="ECO:0000269" key="3">
    <source>
    </source>
</evidence>
<evidence type="ECO:0000269" key="4">
    <source>
    </source>
</evidence>
<evidence type="ECO:0000269" key="5">
    <source>
    </source>
</evidence>
<evidence type="ECO:0000303" key="6">
    <source>
    </source>
</evidence>
<evidence type="ECO:0000305" key="7"/>
<evidence type="ECO:0000305" key="8">
    <source>
    </source>
</evidence>
<evidence type="ECO:0000305" key="9">
    <source>
    </source>
</evidence>
<evidence type="ECO:0000312" key="10">
    <source>
        <dbReference type="EMBL" id="CAE54613.1"/>
    </source>
</evidence>
<evidence type="ECO:0007744" key="11">
    <source>
        <dbReference type="PDB" id="1NO4"/>
    </source>
</evidence>
<evidence type="ECO:0007744" key="12">
    <source>
        <dbReference type="PDB" id="1NOH"/>
    </source>
</evidence>
<evidence type="ECO:0007829" key="13">
    <source>
        <dbReference type="PDB" id="3MTU"/>
    </source>
</evidence>
<evidence type="ECO:0007829" key="14">
    <source>
        <dbReference type="PDB" id="6YJD"/>
    </source>
</evidence>
<protein>
    <recommendedName>
        <fullName evidence="6">Capsid assembly scaffolding protein</fullName>
    </recommendedName>
    <alternativeName>
        <fullName evidence="7">Gene product 7</fullName>
        <shortName evidence="7">gp7</shortName>
    </alternativeName>
    <alternativeName>
        <fullName evidence="7">Head morphogenesis protein</fullName>
    </alternativeName>
    <alternativeName>
        <fullName evidence="7">Protein p7</fullName>
    </alternativeName>
    <alternativeName>
        <fullName evidence="7">Scaffold protein</fullName>
    </alternativeName>
</protein>
<name>SCAF_BPPH2</name>
<keyword id="KW-0002">3D-structure</keyword>
<keyword id="KW-0175">Coiled coil</keyword>
<keyword id="KW-0238">DNA-binding</keyword>
<keyword id="KW-0426">Late protein</keyword>
<keyword id="KW-1185">Reference proteome</keyword>
<keyword id="KW-0118">Viral capsid assembly</keyword>
<keyword id="KW-1188">Viral release from host cell</keyword>
<organism>
    <name type="scientific">Bacillus phage phi29</name>
    <name type="common">Bacteriophage phi-29</name>
    <dbReference type="NCBI Taxonomy" id="2884424"/>
    <lineage>
        <taxon>Viruses</taxon>
        <taxon>Duplodnaviria</taxon>
        <taxon>Heunggongvirae</taxon>
        <taxon>Uroviricota</taxon>
        <taxon>Caudoviricetes</taxon>
        <taxon>Salasmaviridae</taxon>
        <taxon>Picovirinae</taxon>
        <taxon>Salasvirus</taxon>
        <taxon>Salasvirus phi29</taxon>
    </lineage>
</organism>
<proteinExistence type="evidence at protein level"/>